<gene>
    <name evidence="1" type="primary">rpsD</name>
    <name type="ordered locus">Rsph17025_2214</name>
</gene>
<comment type="function">
    <text evidence="1">One of the primary rRNA binding proteins, it binds directly to 16S rRNA where it nucleates assembly of the body of the 30S subunit.</text>
</comment>
<comment type="function">
    <text evidence="1">With S5 and S12 plays an important role in translational accuracy.</text>
</comment>
<comment type="subunit">
    <text evidence="1">Part of the 30S ribosomal subunit. Contacts protein S5. The interaction surface between S4 and S5 is involved in control of translational fidelity.</text>
</comment>
<comment type="similarity">
    <text evidence="1">Belongs to the universal ribosomal protein uS4 family.</text>
</comment>
<name>RS4_CERS5</name>
<sequence length="206" mass="23702">MTKRTSAKYKIDRRMGENIWGRPKSPVNKREYGPGQHGQRRKNKLSDFGTQLRAKQKLKGYYGDLTEKQFRKIYAEAERVKGDTGEMLVGLLERRLDAIVYRAKFVPTVFAARQFVNHGHVTVNGQRVNIGSYRCKEGDVIQVRERSRQLAIVLEATQLAERDVPDYIEVDYSKMTATFVRTPSLGDVPYPVVMEPNLVVEFYAKN</sequence>
<proteinExistence type="inferred from homology"/>
<protein>
    <recommendedName>
        <fullName evidence="1">Small ribosomal subunit protein uS4</fullName>
    </recommendedName>
    <alternativeName>
        <fullName evidence="3">30S ribosomal protein S4</fullName>
    </alternativeName>
</protein>
<accession>A4WUP0</accession>
<dbReference type="EMBL" id="CP000661">
    <property type="protein sequence ID" value="ABP71104.1"/>
    <property type="molecule type" value="Genomic_DNA"/>
</dbReference>
<dbReference type="SMR" id="A4WUP0"/>
<dbReference type="STRING" id="349102.Rsph17025_2214"/>
<dbReference type="KEGG" id="rsq:Rsph17025_2214"/>
<dbReference type="eggNOG" id="COG0522">
    <property type="taxonomic scope" value="Bacteria"/>
</dbReference>
<dbReference type="HOGENOM" id="CLU_092403_0_0_5"/>
<dbReference type="BioCyc" id="RSPH349102:G1G8M-2282-MONOMER"/>
<dbReference type="GO" id="GO:0015935">
    <property type="term" value="C:small ribosomal subunit"/>
    <property type="evidence" value="ECO:0007669"/>
    <property type="project" value="InterPro"/>
</dbReference>
<dbReference type="GO" id="GO:0019843">
    <property type="term" value="F:rRNA binding"/>
    <property type="evidence" value="ECO:0007669"/>
    <property type="project" value="UniProtKB-UniRule"/>
</dbReference>
<dbReference type="GO" id="GO:0003735">
    <property type="term" value="F:structural constituent of ribosome"/>
    <property type="evidence" value="ECO:0007669"/>
    <property type="project" value="InterPro"/>
</dbReference>
<dbReference type="GO" id="GO:0042274">
    <property type="term" value="P:ribosomal small subunit biogenesis"/>
    <property type="evidence" value="ECO:0007669"/>
    <property type="project" value="TreeGrafter"/>
</dbReference>
<dbReference type="GO" id="GO:0006412">
    <property type="term" value="P:translation"/>
    <property type="evidence" value="ECO:0007669"/>
    <property type="project" value="UniProtKB-UniRule"/>
</dbReference>
<dbReference type="CDD" id="cd00165">
    <property type="entry name" value="S4"/>
    <property type="match status" value="1"/>
</dbReference>
<dbReference type="FunFam" id="3.10.290.10:FF:000001">
    <property type="entry name" value="30S ribosomal protein S4"/>
    <property type="match status" value="1"/>
</dbReference>
<dbReference type="Gene3D" id="1.10.1050.10">
    <property type="entry name" value="Ribosomal Protein S4 Delta 41, Chain A, domain 1"/>
    <property type="match status" value="1"/>
</dbReference>
<dbReference type="Gene3D" id="3.10.290.10">
    <property type="entry name" value="RNA-binding S4 domain"/>
    <property type="match status" value="1"/>
</dbReference>
<dbReference type="HAMAP" id="MF_01306_B">
    <property type="entry name" value="Ribosomal_uS4_B"/>
    <property type="match status" value="1"/>
</dbReference>
<dbReference type="InterPro" id="IPR022801">
    <property type="entry name" value="Ribosomal_uS4"/>
</dbReference>
<dbReference type="InterPro" id="IPR005709">
    <property type="entry name" value="Ribosomal_uS4_bac-type"/>
</dbReference>
<dbReference type="InterPro" id="IPR018079">
    <property type="entry name" value="Ribosomal_uS4_CS"/>
</dbReference>
<dbReference type="InterPro" id="IPR001912">
    <property type="entry name" value="Ribosomal_uS4_N"/>
</dbReference>
<dbReference type="InterPro" id="IPR002942">
    <property type="entry name" value="S4_RNA-bd"/>
</dbReference>
<dbReference type="InterPro" id="IPR036986">
    <property type="entry name" value="S4_RNA-bd_sf"/>
</dbReference>
<dbReference type="NCBIfam" id="NF003717">
    <property type="entry name" value="PRK05327.1"/>
    <property type="match status" value="1"/>
</dbReference>
<dbReference type="NCBIfam" id="TIGR01017">
    <property type="entry name" value="rpsD_bact"/>
    <property type="match status" value="1"/>
</dbReference>
<dbReference type="PANTHER" id="PTHR11831">
    <property type="entry name" value="30S 40S RIBOSOMAL PROTEIN"/>
    <property type="match status" value="1"/>
</dbReference>
<dbReference type="PANTHER" id="PTHR11831:SF4">
    <property type="entry name" value="SMALL RIBOSOMAL SUBUNIT PROTEIN US4M"/>
    <property type="match status" value="1"/>
</dbReference>
<dbReference type="Pfam" id="PF00163">
    <property type="entry name" value="Ribosomal_S4"/>
    <property type="match status" value="1"/>
</dbReference>
<dbReference type="Pfam" id="PF01479">
    <property type="entry name" value="S4"/>
    <property type="match status" value="1"/>
</dbReference>
<dbReference type="SMART" id="SM01390">
    <property type="entry name" value="Ribosomal_S4"/>
    <property type="match status" value="1"/>
</dbReference>
<dbReference type="SMART" id="SM00363">
    <property type="entry name" value="S4"/>
    <property type="match status" value="1"/>
</dbReference>
<dbReference type="SUPFAM" id="SSF55174">
    <property type="entry name" value="Alpha-L RNA-binding motif"/>
    <property type="match status" value="1"/>
</dbReference>
<dbReference type="PROSITE" id="PS00632">
    <property type="entry name" value="RIBOSOMAL_S4"/>
    <property type="match status" value="1"/>
</dbReference>
<dbReference type="PROSITE" id="PS50889">
    <property type="entry name" value="S4"/>
    <property type="match status" value="1"/>
</dbReference>
<keyword id="KW-0687">Ribonucleoprotein</keyword>
<keyword id="KW-0689">Ribosomal protein</keyword>
<keyword id="KW-0694">RNA-binding</keyword>
<keyword id="KW-0699">rRNA-binding</keyword>
<evidence type="ECO:0000255" key="1">
    <source>
        <dbReference type="HAMAP-Rule" id="MF_01306"/>
    </source>
</evidence>
<evidence type="ECO:0000256" key="2">
    <source>
        <dbReference type="SAM" id="MobiDB-lite"/>
    </source>
</evidence>
<evidence type="ECO:0000305" key="3"/>
<feature type="chain" id="PRO_0000322324" description="Small ribosomal subunit protein uS4">
    <location>
        <begin position="1"/>
        <end position="206"/>
    </location>
</feature>
<feature type="domain" description="S4 RNA-binding" evidence="1">
    <location>
        <begin position="94"/>
        <end position="157"/>
    </location>
</feature>
<feature type="region of interest" description="Disordered" evidence="2">
    <location>
        <begin position="15"/>
        <end position="46"/>
    </location>
</feature>
<reference key="1">
    <citation type="submission" date="2007-04" db="EMBL/GenBank/DDBJ databases">
        <title>Complete sequence of chromosome of Rhodobacter sphaeroides ATCC 17025.</title>
        <authorList>
            <consortium name="US DOE Joint Genome Institute"/>
            <person name="Copeland A."/>
            <person name="Lucas S."/>
            <person name="Lapidus A."/>
            <person name="Barry K."/>
            <person name="Detter J.C."/>
            <person name="Glavina del Rio T."/>
            <person name="Hammon N."/>
            <person name="Israni S."/>
            <person name="Dalin E."/>
            <person name="Tice H."/>
            <person name="Pitluck S."/>
            <person name="Chertkov O."/>
            <person name="Brettin T."/>
            <person name="Bruce D."/>
            <person name="Han C."/>
            <person name="Schmutz J."/>
            <person name="Larimer F."/>
            <person name="Land M."/>
            <person name="Hauser L."/>
            <person name="Kyrpides N."/>
            <person name="Kim E."/>
            <person name="Richardson P."/>
            <person name="Mackenzie C."/>
            <person name="Choudhary M."/>
            <person name="Donohue T.J."/>
            <person name="Kaplan S."/>
        </authorList>
    </citation>
    <scope>NUCLEOTIDE SEQUENCE [LARGE SCALE GENOMIC DNA]</scope>
    <source>
        <strain>ATCC 17025 / ATH 2.4.3</strain>
    </source>
</reference>
<organism>
    <name type="scientific">Cereibacter sphaeroides (strain ATCC 17025 / ATH 2.4.3)</name>
    <name type="common">Rhodobacter sphaeroides</name>
    <dbReference type="NCBI Taxonomy" id="349102"/>
    <lineage>
        <taxon>Bacteria</taxon>
        <taxon>Pseudomonadati</taxon>
        <taxon>Pseudomonadota</taxon>
        <taxon>Alphaproteobacteria</taxon>
        <taxon>Rhodobacterales</taxon>
        <taxon>Paracoccaceae</taxon>
        <taxon>Cereibacter</taxon>
    </lineage>
</organism>